<gene>
    <name evidence="7" type="primary">UCP1</name>
    <name evidence="4" type="synonym">SLC25A7</name>
</gene>
<protein>
    <recommendedName>
        <fullName evidence="8">Mitochondrial brown fat uncoupling protein 1</fullName>
        <shortName evidence="8">UCP 1</shortName>
    </recommendedName>
    <alternativeName>
        <fullName evidence="4">Solute carrier family 25 member 7</fullName>
    </alternativeName>
    <alternativeName>
        <fullName evidence="1">Thermogenin</fullName>
    </alternativeName>
</protein>
<organism>
    <name type="scientific">Dicrostonyx groenlandicus</name>
    <name type="common">Northern collared lemming</name>
    <dbReference type="NCBI Taxonomy" id="85953"/>
    <lineage>
        <taxon>Eukaryota</taxon>
        <taxon>Metazoa</taxon>
        <taxon>Chordata</taxon>
        <taxon>Craniata</taxon>
        <taxon>Vertebrata</taxon>
        <taxon>Euteleostomi</taxon>
        <taxon>Mammalia</taxon>
        <taxon>Eutheria</taxon>
        <taxon>Euarchontoglires</taxon>
        <taxon>Glires</taxon>
        <taxon>Rodentia</taxon>
        <taxon>Myomorpha</taxon>
        <taxon>Muroidea</taxon>
        <taxon>Cricetidae</taxon>
        <taxon>Arvicolinae</taxon>
        <taxon>Dicrostonyx</taxon>
    </lineage>
</organism>
<accession>Q8K404</accession>
<feature type="chain" id="PRO_0000090656" description="Mitochondrial brown fat uncoupling protein 1">
    <location>
        <begin position="1"/>
        <end position="307"/>
    </location>
</feature>
<feature type="topological domain" description="Mitochondrial intermembrane" evidence="2">
    <location>
        <begin position="1"/>
        <end position="10"/>
    </location>
</feature>
<feature type="transmembrane region" description="Helical; Name=1" evidence="6">
    <location>
        <begin position="11"/>
        <end position="32"/>
    </location>
</feature>
<feature type="topological domain" description="Mitochondrial matrix" evidence="2">
    <location>
        <begin position="33"/>
        <end position="73"/>
    </location>
</feature>
<feature type="transmembrane region" description="Helical; Name=2" evidence="6">
    <location>
        <begin position="74"/>
        <end position="96"/>
    </location>
</feature>
<feature type="topological domain" description="Mitochondrial intermembrane" evidence="2">
    <location>
        <begin position="97"/>
        <end position="116"/>
    </location>
</feature>
<feature type="transmembrane region" description="Helical; Name=3" evidence="6">
    <location>
        <begin position="117"/>
        <end position="133"/>
    </location>
</feature>
<feature type="topological domain" description="Mitochondrial matrix" evidence="2">
    <location>
        <begin position="134"/>
        <end position="178"/>
    </location>
</feature>
<feature type="transmembrane region" description="Helical; Name=4" evidence="6">
    <location>
        <begin position="179"/>
        <end position="195"/>
    </location>
</feature>
<feature type="topological domain" description="Mitochondrial intermembrane" evidence="2">
    <location>
        <begin position="196"/>
        <end position="212"/>
    </location>
</feature>
<feature type="transmembrane region" description="Helical; Name=5" evidence="6">
    <location>
        <begin position="213"/>
        <end position="232"/>
    </location>
</feature>
<feature type="topological domain" description="Mitochondrial matrix" evidence="2">
    <location>
        <begin position="233"/>
        <end position="266"/>
    </location>
</feature>
<feature type="transmembrane region" description="Helical; Name=6" evidence="6">
    <location>
        <begin position="267"/>
        <end position="289"/>
    </location>
</feature>
<feature type="topological domain" description="Mitochondrial intermembrane" evidence="2">
    <location>
        <begin position="290"/>
        <end position="307"/>
    </location>
</feature>
<feature type="repeat" description="Solcar 1">
    <location>
        <begin position="11"/>
        <end position="102"/>
    </location>
</feature>
<feature type="repeat" description="Solcar 2">
    <location>
        <begin position="111"/>
        <end position="201"/>
    </location>
</feature>
<feature type="repeat" description="Solcar 3">
    <location>
        <begin position="210"/>
        <end position="295"/>
    </location>
</feature>
<feature type="binding site" evidence="4">
    <location>
        <position position="56"/>
    </location>
    <ligand>
        <name>fatty acid 16:0</name>
        <dbReference type="ChEBI" id="CHEBI:78123"/>
    </ligand>
</feature>
<feature type="binding site" evidence="4">
    <location>
        <position position="269"/>
    </location>
    <ligand>
        <name>fatty acid 16:0</name>
        <dbReference type="ChEBI" id="CHEBI:78123"/>
    </ligand>
</feature>
<feature type="modified residue" description="Cysteine sulfenic acid (-SOH)" evidence="3">
    <location>
        <position position="254"/>
    </location>
</feature>
<comment type="function">
    <text evidence="3">Mitochondrial protein responsible for thermogenic respiration, a specialized capacity of brown adipose tissue and beige fat that participates in non-shivering adaptive thermogenesis to temperature and diet variations and more generally to the regulation of energy balance. Functions as a long-chain fatty acid/LCFA and proton symporter, simultaneously transporting one LCFA and one proton through the inner mitochondrial membrane. However, LCFAs remaining associated with the transporter via their hydrophobic tails, it results in an apparent transport of protons activated by LCFAs. Thereby, dissipates the mitochondrial proton gradient and converts the energy of substrate oxydation into heat instead of ATP. Regulates the production of reactive oxygen species/ROS by mitochondria.</text>
</comment>
<comment type="catalytic activity">
    <reaction evidence="4">
        <text>H(+)(in) = H(+)(out)</text>
        <dbReference type="Rhea" id="RHEA:34979"/>
        <dbReference type="ChEBI" id="CHEBI:15378"/>
    </reaction>
</comment>
<comment type="activity regulation">
    <text evidence="3">Has no constitutive proton transporter activity and has to be activated by long-chain fatty acids/LCFAs. Inhibited by purine nucleotides. Both purine nucleotides and LCFAs bind the cytosolic side of the transporter and directly compete to activate or inhibit it. Activated by noradrenaline and reactive oxygen species. Despite lacking canonical translational encoding for selenocysteine, a small pool of the protein has been observed to selectively incorporate selenocysteine at 'Cys-254'. Selenocysteine-modified protein is highly sensitive to redox modification and may constitute a pool of protein highly sensitive to activation by elevated levels of reactive oxygen species (ROS).</text>
</comment>
<comment type="subunit">
    <text evidence="4 5">Most probably functions as a monomer. Binds one purine nucleotide per monomer. However, has also been suggested to function as a homodimer or a homotetramer. Tightly associates with cardiolipin in the mitochondrion inner membrane; may stabilize and regulate its activity.</text>
</comment>
<comment type="subcellular location">
    <subcellularLocation>
        <location evidence="3">Mitochondrion inner membrane</location>
        <topology evidence="2">Multi-pass membrane protein</topology>
    </subcellularLocation>
</comment>
<comment type="PTM">
    <text evidence="3">May undergo sulfenylation upon cold exposure. May increase the sensitivity of UCP1 thermogenic function to the activation by noradrenaline probably through structural effects.</text>
</comment>
<comment type="PTM">
    <text evidence="2">May undergo ubiquitin-mediated proteasomal degradation.</text>
</comment>
<comment type="similarity">
    <text evidence="8">Belongs to the mitochondrial carrier (TC 2.A.29) family.</text>
</comment>
<reference key="1">
    <citation type="journal article" date="2002" name="Obes. Res.">
        <title>Effects of energy expenditure and Ucp1 on photoperiod-induced weight gain in collared lemmings.</title>
        <authorList>
            <person name="Powell C.S."/>
            <person name="Blaylock M.L."/>
            <person name="Wang R."/>
            <person name="Hunter H.L."/>
            <person name="Johanning G.L."/>
            <person name="Nagy T.R."/>
        </authorList>
    </citation>
    <scope>NUCLEOTIDE SEQUENCE [MRNA]</scope>
</reference>
<evidence type="ECO:0000250" key="1">
    <source>
        <dbReference type="UniProtKB" id="P04575"/>
    </source>
</evidence>
<evidence type="ECO:0000250" key="2">
    <source>
        <dbReference type="UniProtKB" id="P04633"/>
    </source>
</evidence>
<evidence type="ECO:0000250" key="3">
    <source>
        <dbReference type="UniProtKB" id="P12242"/>
    </source>
</evidence>
<evidence type="ECO:0000250" key="4">
    <source>
        <dbReference type="UniProtKB" id="P25874"/>
    </source>
</evidence>
<evidence type="ECO:0000250" key="5">
    <source>
        <dbReference type="UniProtKB" id="W5PSH7"/>
    </source>
</evidence>
<evidence type="ECO:0000255" key="6"/>
<evidence type="ECO:0000303" key="7">
    <source>
    </source>
</evidence>
<evidence type="ECO:0000305" key="8"/>
<proteinExistence type="evidence at transcript level"/>
<sequence>MVSLTTSEVHPTMGVKTFSAGISACLADIITFPLDTAKVRLQIQGEGQTSSTIRYKGVLGTITTLAKTEGWPKLYSGLPAGIQRQISFASLRIGLYDTVQEYFSSGKETPPTLGNRISAGLMTGGVAVFIGQPTEVVKVRLQAQSHLHGIKPRYTGTYNAYRIIATTESFSTLWKGTTPNLMRNVIINRTELVTYDLMKGALVNNQILADDVPCHLLSALVAGFCTTFLASPADVVKTRFINSLPGQYPSVPSCAMTMLTKEGPTAFFKGFVPSFLRLASWNVIMFVCFEQLKKELMKSRQTMDCTT</sequence>
<dbReference type="EMBL" id="AF515781">
    <property type="protein sequence ID" value="AAM49148.1"/>
    <property type="molecule type" value="mRNA"/>
</dbReference>
<dbReference type="SMR" id="Q8K404"/>
<dbReference type="GO" id="GO:0005743">
    <property type="term" value="C:mitochondrial inner membrane"/>
    <property type="evidence" value="ECO:0000250"/>
    <property type="project" value="UniProtKB"/>
</dbReference>
<dbReference type="GO" id="GO:1901612">
    <property type="term" value="F:cardiolipin binding"/>
    <property type="evidence" value="ECO:0000250"/>
    <property type="project" value="UniProtKB"/>
</dbReference>
<dbReference type="GO" id="GO:0036041">
    <property type="term" value="F:long-chain fatty acid binding"/>
    <property type="evidence" value="ECO:0000250"/>
    <property type="project" value="UniProtKB"/>
</dbReference>
<dbReference type="GO" id="GO:0017077">
    <property type="term" value="F:oxidative phosphorylation uncoupler activity"/>
    <property type="evidence" value="ECO:0000250"/>
    <property type="project" value="UniProtKB"/>
</dbReference>
<dbReference type="GO" id="GO:0032555">
    <property type="term" value="F:purine ribonucleotide binding"/>
    <property type="evidence" value="ECO:0000250"/>
    <property type="project" value="UniProtKB"/>
</dbReference>
<dbReference type="GO" id="GO:1990845">
    <property type="term" value="P:adaptive thermogenesis"/>
    <property type="evidence" value="ECO:0000250"/>
    <property type="project" value="UniProtKB"/>
</dbReference>
<dbReference type="GO" id="GO:0071398">
    <property type="term" value="P:cellular response to fatty acid"/>
    <property type="evidence" value="ECO:0000250"/>
    <property type="project" value="UniProtKB"/>
</dbReference>
<dbReference type="GO" id="GO:0032870">
    <property type="term" value="P:cellular response to hormone stimulus"/>
    <property type="evidence" value="ECO:0000250"/>
    <property type="project" value="UniProtKB"/>
</dbReference>
<dbReference type="GO" id="GO:0034614">
    <property type="term" value="P:cellular response to reactive oxygen species"/>
    <property type="evidence" value="ECO:0000250"/>
    <property type="project" value="UniProtKB"/>
</dbReference>
<dbReference type="GO" id="GO:1990542">
    <property type="term" value="P:mitochondrial transmembrane transport"/>
    <property type="evidence" value="ECO:0000250"/>
    <property type="project" value="UniProtKB"/>
</dbReference>
<dbReference type="GO" id="GO:1902600">
    <property type="term" value="P:proton transmembrane transport"/>
    <property type="evidence" value="ECO:0000250"/>
    <property type="project" value="UniProtKB"/>
</dbReference>
<dbReference type="GO" id="GO:1903426">
    <property type="term" value="P:regulation of reactive oxygen species biosynthetic process"/>
    <property type="evidence" value="ECO:0000250"/>
    <property type="project" value="UniProtKB"/>
</dbReference>
<dbReference type="GO" id="GO:0031667">
    <property type="term" value="P:response to nutrient levels"/>
    <property type="evidence" value="ECO:0000250"/>
    <property type="project" value="UniProtKB"/>
</dbReference>
<dbReference type="GO" id="GO:0009266">
    <property type="term" value="P:response to temperature stimulus"/>
    <property type="evidence" value="ECO:0000250"/>
    <property type="project" value="UniProtKB"/>
</dbReference>
<dbReference type="FunFam" id="1.50.40.10:FF:000068">
    <property type="entry name" value="Mitochondrial brown fat uncoupling protein 1"/>
    <property type="match status" value="1"/>
</dbReference>
<dbReference type="Gene3D" id="1.50.40.10">
    <property type="entry name" value="Mitochondrial carrier domain"/>
    <property type="match status" value="1"/>
</dbReference>
<dbReference type="InterPro" id="IPR002067">
    <property type="entry name" value="Mit_carrier"/>
</dbReference>
<dbReference type="InterPro" id="IPR050391">
    <property type="entry name" value="Mito_Metabolite_Transporter"/>
</dbReference>
<dbReference type="InterPro" id="IPR018108">
    <property type="entry name" value="Mitochondrial_sb/sol_carrier"/>
</dbReference>
<dbReference type="InterPro" id="IPR023395">
    <property type="entry name" value="Mt_carrier_dom_sf"/>
</dbReference>
<dbReference type="PANTHER" id="PTHR45618">
    <property type="entry name" value="MITOCHONDRIAL DICARBOXYLATE CARRIER-RELATED"/>
    <property type="match status" value="1"/>
</dbReference>
<dbReference type="Pfam" id="PF00153">
    <property type="entry name" value="Mito_carr"/>
    <property type="match status" value="3"/>
</dbReference>
<dbReference type="PRINTS" id="PR00784">
    <property type="entry name" value="MTUNCOUPLING"/>
</dbReference>
<dbReference type="SUPFAM" id="SSF103506">
    <property type="entry name" value="Mitochondrial carrier"/>
    <property type="match status" value="1"/>
</dbReference>
<dbReference type="PROSITE" id="PS50920">
    <property type="entry name" value="SOLCAR"/>
    <property type="match status" value="3"/>
</dbReference>
<name>UCP1_DICGR</name>
<keyword id="KW-0407">Ion channel</keyword>
<keyword id="KW-0406">Ion transport</keyword>
<keyword id="KW-0472">Membrane</keyword>
<keyword id="KW-0496">Mitochondrion</keyword>
<keyword id="KW-0999">Mitochondrion inner membrane</keyword>
<keyword id="KW-0558">Oxidation</keyword>
<keyword id="KW-0677">Repeat</keyword>
<keyword id="KW-0812">Transmembrane</keyword>
<keyword id="KW-1133">Transmembrane helix</keyword>
<keyword id="KW-0813">Transport</keyword>